<keyword id="KW-0029">Amino-acid transport</keyword>
<keyword id="KW-0927">Auxin signaling pathway</keyword>
<keyword id="KW-1003">Cell membrane</keyword>
<keyword id="KW-0325">Glycoprotein</keyword>
<keyword id="KW-0472">Membrane</keyword>
<keyword id="KW-0769">Symport</keyword>
<keyword id="KW-0812">Transmembrane</keyword>
<keyword id="KW-1133">Transmembrane helix</keyword>
<keyword id="KW-0813">Transport</keyword>
<dbReference type="EMBL" id="AJ299397">
    <property type="protein sequence ID" value="CAC12995.1"/>
    <property type="molecule type" value="mRNA"/>
</dbReference>
<dbReference type="EMBL" id="AY115841">
    <property type="protein sequence ID" value="AAM55302.1"/>
    <property type="molecule type" value="Genomic_DNA"/>
</dbReference>
<dbReference type="SMR" id="Q9FEL8"/>
<dbReference type="GlyCosmos" id="Q9FEL8">
    <property type="glycosylation" value="1 site, No reported glycans"/>
</dbReference>
<dbReference type="PaxDb" id="3880-AES99557"/>
<dbReference type="EnsemblPlants" id="rna32604">
    <property type="protein sequence ID" value="RHN57105.1"/>
    <property type="gene ID" value="gene32604"/>
</dbReference>
<dbReference type="GeneID" id="11406709"/>
<dbReference type="Gramene" id="rna32604">
    <property type="protein sequence ID" value="RHN57105.1"/>
    <property type="gene ID" value="gene32604"/>
</dbReference>
<dbReference type="KEGG" id="mtr:11406709"/>
<dbReference type="eggNOG" id="KOG1303">
    <property type="taxonomic scope" value="Eukaryota"/>
</dbReference>
<dbReference type="OMA" id="HIHEEYR"/>
<dbReference type="OrthoDB" id="40134at2759"/>
<dbReference type="ExpressionAtlas" id="Q9FEL8">
    <property type="expression patterns" value="differential"/>
</dbReference>
<dbReference type="GO" id="GO:0005886">
    <property type="term" value="C:plasma membrane"/>
    <property type="evidence" value="ECO:0007669"/>
    <property type="project" value="UniProtKB-SubCell"/>
</dbReference>
<dbReference type="GO" id="GO:0015293">
    <property type="term" value="F:symporter activity"/>
    <property type="evidence" value="ECO:0007669"/>
    <property type="project" value="UniProtKB-KW"/>
</dbReference>
<dbReference type="GO" id="GO:0006865">
    <property type="term" value="P:amino acid transport"/>
    <property type="evidence" value="ECO:0007669"/>
    <property type="project" value="UniProtKB-KW"/>
</dbReference>
<dbReference type="GO" id="GO:0009734">
    <property type="term" value="P:auxin-activated signaling pathway"/>
    <property type="evidence" value="ECO:0007669"/>
    <property type="project" value="UniProtKB-KW"/>
</dbReference>
<dbReference type="InterPro" id="IPR013057">
    <property type="entry name" value="AA_transpt_TM"/>
</dbReference>
<dbReference type="PANTHER" id="PTHR48017">
    <property type="entry name" value="OS05G0424000 PROTEIN-RELATED"/>
    <property type="match status" value="1"/>
</dbReference>
<dbReference type="Pfam" id="PF01490">
    <property type="entry name" value="Aa_trans"/>
    <property type="match status" value="1"/>
</dbReference>
<proteinExistence type="evidence at transcript level"/>
<reference key="1">
    <citation type="journal article" date="2001" name="Mol. Plant Microbe Interact.">
        <title>Expression studies on AUX1-like genes in Medicago truncatula suggest that auxin is required at two steps in early nodule development.</title>
        <authorList>
            <person name="de Billy F."/>
            <person name="Grosjean C."/>
            <person name="May S."/>
            <person name="Bennett M.J."/>
            <person name="Cullimore J.V."/>
        </authorList>
    </citation>
    <scope>NUCLEOTIDE SEQUENCE [MRNA]</scope>
    <scope>FUNCTION</scope>
    <scope>TISSUE SPECIFICITY</scope>
    <scope>INDUCTION</scope>
    <scope>DEVELOPMENTAL STAGE</scope>
    <source>
        <strain>cv. Jemalong</strain>
        <tissue>Root</tissue>
    </source>
</reference>
<reference key="2">
    <citation type="journal article" date="2004" name="Mol. Genet. Genomics">
        <title>The PIN and LAX families of auxin transport genes in Medicago truncatula.</title>
        <authorList>
            <person name="Schnabel E.L."/>
            <person name="Frugoli J."/>
        </authorList>
    </citation>
    <scope>NUCLEOTIDE SEQUENCE [GENOMIC DNA]</scope>
    <scope>GENE FAMILY</scope>
    <scope>TISSUE SPECIFICITY</scope>
</reference>
<sequence>MLSEKQGEETMMSSLNETIELNEEREEEKGASPGSGFKNFLWHGGSVYDAWFSCASNQVAQVLLTLPYSFSQLGMISGIIFQVFYGLMGSWTAYLISILYVEYRSRKEKENVSFKNHVIQWFEVLEGLLGPYWKAIGLAFNCTFLLFGSVIQLIACASNIYYINDHLDKRTWTYIFGACCATTVFIPSFHNYRIWSFLGLGMTTYTAWYMTIAAIVHGQVENVVHSGPKKMVWYFTGATNILYTFGGHAVTVEIMHAMWKPQKFKAIYFFATLYVFTLTLPSAIAVYWAFGDQLLDHSNAFSLLPRNAWRDAGVILMLIHQFITFGFACTPLYFVWEKVIGMHDTKSIFLRALARLPVVIPIWFLAIIFPFFGPINSAVGALLVSFTVYVIPASAHMLTYRSASARQNAAEKLPKVIPSWTLMYVINAFVVIWVTIVGFGFGGWASMTNFIKQVDTFGLFAKCYQCPPKLPASNHTMHH</sequence>
<feature type="chain" id="PRO_0000093845" description="Auxin transporter-like protein 1">
    <location>
        <begin position="1"/>
        <end position="479"/>
    </location>
</feature>
<feature type="topological domain" description="Cytoplasmic" evidence="2">
    <location>
        <begin position="1"/>
        <end position="58"/>
    </location>
</feature>
<feature type="transmembrane region" description="Helical" evidence="2">
    <location>
        <begin position="59"/>
        <end position="76"/>
    </location>
</feature>
<feature type="topological domain" description="Extracellular" evidence="2">
    <location>
        <begin position="77"/>
        <end position="78"/>
    </location>
</feature>
<feature type="transmembrane region" description="Helical" evidence="2">
    <location>
        <begin position="79"/>
        <end position="99"/>
    </location>
</feature>
<feature type="topological domain" description="Cytoplasmic" evidence="2">
    <location>
        <begin position="100"/>
        <end position="134"/>
    </location>
</feature>
<feature type="transmembrane region" description="Helical" evidence="2">
    <location>
        <begin position="135"/>
        <end position="155"/>
    </location>
</feature>
<feature type="topological domain" description="Extracellular" evidence="2">
    <location>
        <begin position="156"/>
        <end position="171"/>
    </location>
</feature>
<feature type="transmembrane region" description="Helical" evidence="2">
    <location>
        <begin position="172"/>
        <end position="192"/>
    </location>
</feature>
<feature type="topological domain" description="Cytoplasmic" evidence="2">
    <location>
        <begin position="193"/>
        <end position="195"/>
    </location>
</feature>
<feature type="transmembrane region" description="Helical" evidence="2">
    <location>
        <begin position="196"/>
        <end position="216"/>
    </location>
</feature>
<feature type="topological domain" description="Extracellular" evidence="2">
    <location>
        <begin position="217"/>
        <end position="231"/>
    </location>
</feature>
<feature type="transmembrane region" description="Helical" evidence="2">
    <location>
        <begin position="232"/>
        <end position="252"/>
    </location>
</feature>
<feature type="topological domain" description="Cytoplasmic" evidence="2">
    <location>
        <begin position="253"/>
        <end position="265"/>
    </location>
</feature>
<feature type="transmembrane region" description="Helical" evidence="2">
    <location>
        <begin position="266"/>
        <end position="286"/>
    </location>
</feature>
<feature type="topological domain" description="Extracellular" evidence="2">
    <location>
        <begin position="287"/>
        <end position="313"/>
    </location>
</feature>
<feature type="transmembrane region" description="Helical" evidence="2">
    <location>
        <begin position="314"/>
        <end position="334"/>
    </location>
</feature>
<feature type="topological domain" description="Cytoplasmic" evidence="2">
    <location>
        <begin position="335"/>
        <end position="355"/>
    </location>
</feature>
<feature type="transmembrane region" description="Helical" evidence="2">
    <location>
        <begin position="356"/>
        <end position="376"/>
    </location>
</feature>
<feature type="topological domain" description="Extracellular" evidence="2">
    <location>
        <position position="377"/>
    </location>
</feature>
<feature type="transmembrane region" description="Helical" evidence="2">
    <location>
        <begin position="378"/>
        <end position="398"/>
    </location>
</feature>
<feature type="topological domain" description="Cytoplasmic" evidence="2">
    <location>
        <begin position="399"/>
        <end position="421"/>
    </location>
</feature>
<feature type="transmembrane region" description="Helical" evidence="2">
    <location>
        <begin position="422"/>
        <end position="442"/>
    </location>
</feature>
<feature type="topological domain" description="Extracellular" evidence="2">
    <location>
        <begin position="443"/>
        <end position="479"/>
    </location>
</feature>
<feature type="glycosylation site" description="N-linked (GlcNAc...) asparagine" evidence="2">
    <location>
        <position position="474"/>
    </location>
</feature>
<gene>
    <name type="primary">LAX1</name>
</gene>
<organism>
    <name type="scientific">Medicago truncatula</name>
    <name type="common">Barrel medic</name>
    <name type="synonym">Medicago tribuloides</name>
    <dbReference type="NCBI Taxonomy" id="3880"/>
    <lineage>
        <taxon>Eukaryota</taxon>
        <taxon>Viridiplantae</taxon>
        <taxon>Streptophyta</taxon>
        <taxon>Embryophyta</taxon>
        <taxon>Tracheophyta</taxon>
        <taxon>Spermatophyta</taxon>
        <taxon>Magnoliopsida</taxon>
        <taxon>eudicotyledons</taxon>
        <taxon>Gunneridae</taxon>
        <taxon>Pentapetalae</taxon>
        <taxon>rosids</taxon>
        <taxon>fabids</taxon>
        <taxon>Fabales</taxon>
        <taxon>Fabaceae</taxon>
        <taxon>Papilionoideae</taxon>
        <taxon>50 kb inversion clade</taxon>
        <taxon>NPAAA clade</taxon>
        <taxon>Hologalegina</taxon>
        <taxon>IRL clade</taxon>
        <taxon>Trifolieae</taxon>
        <taxon>Medicago</taxon>
    </lineage>
</organism>
<name>LAX1_MEDTR</name>
<evidence type="ECO:0000250" key="1"/>
<evidence type="ECO:0000255" key="2"/>
<evidence type="ECO:0000269" key="3">
    <source>
    </source>
</evidence>
<evidence type="ECO:0000269" key="4">
    <source>
    </source>
</evidence>
<evidence type="ECO:0000305" key="5"/>
<comment type="function">
    <text evidence="1 3">Carrier protein involved in proton-driven auxin influx. Mediates the formation of auxin gradient from developing leaves (site of auxin biosynthesis) to tips by contributing to the loading of auxin in vascular tissues and facilitating acropetal (base to tip) auxin transport within inner tissues of the root apex, and basipetal (tip to base) auxin transport within outer tissues of the root apex (By similarity). May be involved in lateral roots and nodules formation.</text>
</comment>
<comment type="subcellular location">
    <subcellularLocation>
        <location evidence="1">Cell membrane</location>
        <topology evidence="1">Multi-pass membrane protein</topology>
    </subcellularLocation>
</comment>
<comment type="tissue specificity">
    <text evidence="3 4">Shoots and roots of nodulating plants. Higher levels in roots, flowers and stems, lower in nodules, leaves, petioles and shoot apices.</text>
</comment>
<comment type="developmental stage">
    <text evidence="3">In primary roots, mostly localized in tips and to a lower extent in vasculature of older regions. In root tips, mostly expressed in the central tissues of the elongating zone (developing vasculature), in the starch-filled cells of the root cap and in some cortical cells. During lateral root development, striking expression in the proximal region of the primordium, close to the primary root central cylinder, and then in elongating cells of the developing vasculature and in developing root cap. During nodule formation, expressed in young elongated primordium, mostly in cells close to the root vasculature. In later stages, confined in small cells rich in amyloplasts with small nuclei. Near the periphery of developing nodules strong expression at the base that tapers off toward the apex. Not expressed in mature nodules.</text>
</comment>
<comment type="induction">
    <text evidence="3">Transient induction in roots by S.meliloti.</text>
</comment>
<comment type="similarity">
    <text evidence="5">Belongs to the amino acid/polyamine transporter 2 family. Amino acid/auxin permease (AAAP) (TC 2.A.18.1) subfamily.</text>
</comment>
<comment type="caution">
    <text evidence="5">Because of the similarity in sequence, the probe used to describe the developmental stages did not discriminate among the various MtLAX mRNAs.</text>
</comment>
<accession>Q9FEL8</accession>
<protein>
    <recommendedName>
        <fullName>Auxin transporter-like protein 1</fullName>
    </recommendedName>
    <alternativeName>
        <fullName>AUX1-like protein 1</fullName>
    </alternativeName>
    <alternativeName>
        <fullName>MtLAX1</fullName>
    </alternativeName>
</protein>